<protein>
    <recommendedName>
        <fullName>Ferric uptake regulation protein</fullName>
        <shortName>Ferric uptake regulator</shortName>
    </recommendedName>
</protein>
<keyword id="KW-0963">Cytoplasm</keyword>
<keyword id="KW-0238">DNA-binding</keyword>
<keyword id="KW-0408">Iron</keyword>
<keyword id="KW-0479">Metal-binding</keyword>
<keyword id="KW-1185">Reference proteome</keyword>
<keyword id="KW-0678">Repressor</keyword>
<keyword id="KW-0804">Transcription</keyword>
<keyword id="KW-0805">Transcription regulation</keyword>
<keyword id="KW-0862">Zinc</keyword>
<evidence type="ECO:0000250" key="1"/>
<evidence type="ECO:0000305" key="2"/>
<feature type="chain" id="PRO_0000095581" description="Ferric uptake regulation protein">
    <location>
        <begin position="1"/>
        <end position="139"/>
    </location>
</feature>
<feature type="region of interest" description="DNA-binding" evidence="1">
    <location>
        <begin position="1"/>
        <end position="85"/>
    </location>
</feature>
<feature type="region of interest" description="Dimerization" evidence="1">
    <location>
        <begin position="86"/>
        <end position="139"/>
    </location>
</feature>
<feature type="binding site" evidence="1">
    <location>
        <position position="88"/>
    </location>
    <ligand>
        <name>Fe cation</name>
        <dbReference type="ChEBI" id="CHEBI:24875"/>
    </ligand>
</feature>
<feature type="binding site" evidence="1">
    <location>
        <position position="90"/>
    </location>
    <ligand>
        <name>Fe cation</name>
        <dbReference type="ChEBI" id="CHEBI:24875"/>
    </ligand>
</feature>
<feature type="binding site" evidence="1">
    <location>
        <position position="94"/>
    </location>
    <ligand>
        <name>Zn(2+)</name>
        <dbReference type="ChEBI" id="CHEBI:29105"/>
    </ligand>
</feature>
<feature type="binding site" evidence="1">
    <location>
        <position position="97"/>
    </location>
    <ligand>
        <name>Zn(2+)</name>
        <dbReference type="ChEBI" id="CHEBI:29105"/>
    </ligand>
</feature>
<feature type="binding site" evidence="1">
    <location>
        <position position="109"/>
    </location>
    <ligand>
        <name>Fe cation</name>
        <dbReference type="ChEBI" id="CHEBI:24875"/>
    </ligand>
</feature>
<feature type="binding site" evidence="1">
    <location>
        <position position="123"/>
    </location>
    <ligand>
        <name>Fe cation</name>
        <dbReference type="ChEBI" id="CHEBI:24875"/>
    </ligand>
</feature>
<name>FUR_STAEQ</name>
<gene>
    <name type="primary">fur</name>
    <name type="ordered locus">SERP1120</name>
</gene>
<dbReference type="EMBL" id="CP000029">
    <property type="protein sequence ID" value="AAW54533.1"/>
    <property type="molecule type" value="Genomic_DNA"/>
</dbReference>
<dbReference type="RefSeq" id="WP_001831164.1">
    <property type="nucleotide sequence ID" value="NC_002976.3"/>
</dbReference>
<dbReference type="SMR" id="Q5HNZ4"/>
<dbReference type="STRING" id="176279.SERP1120"/>
<dbReference type="KEGG" id="ser:SERP1120"/>
<dbReference type="eggNOG" id="COG0735">
    <property type="taxonomic scope" value="Bacteria"/>
</dbReference>
<dbReference type="HOGENOM" id="CLU_096072_5_1_9"/>
<dbReference type="Proteomes" id="UP000000531">
    <property type="component" value="Chromosome"/>
</dbReference>
<dbReference type="GO" id="GO:0005737">
    <property type="term" value="C:cytoplasm"/>
    <property type="evidence" value="ECO:0007669"/>
    <property type="project" value="UniProtKB-SubCell"/>
</dbReference>
<dbReference type="GO" id="GO:0003700">
    <property type="term" value="F:DNA-binding transcription factor activity"/>
    <property type="evidence" value="ECO:0007669"/>
    <property type="project" value="InterPro"/>
</dbReference>
<dbReference type="GO" id="GO:0000976">
    <property type="term" value="F:transcription cis-regulatory region binding"/>
    <property type="evidence" value="ECO:0007669"/>
    <property type="project" value="TreeGrafter"/>
</dbReference>
<dbReference type="GO" id="GO:0008270">
    <property type="term" value="F:zinc ion binding"/>
    <property type="evidence" value="ECO:0007669"/>
    <property type="project" value="TreeGrafter"/>
</dbReference>
<dbReference type="GO" id="GO:0045892">
    <property type="term" value="P:negative regulation of DNA-templated transcription"/>
    <property type="evidence" value="ECO:0007669"/>
    <property type="project" value="TreeGrafter"/>
</dbReference>
<dbReference type="GO" id="GO:1900376">
    <property type="term" value="P:regulation of secondary metabolite biosynthetic process"/>
    <property type="evidence" value="ECO:0007669"/>
    <property type="project" value="TreeGrafter"/>
</dbReference>
<dbReference type="CDD" id="cd07153">
    <property type="entry name" value="Fur_like"/>
    <property type="match status" value="1"/>
</dbReference>
<dbReference type="Gene3D" id="3.30.1490.190">
    <property type="match status" value="1"/>
</dbReference>
<dbReference type="Gene3D" id="1.10.10.10">
    <property type="entry name" value="Winged helix-like DNA-binding domain superfamily/Winged helix DNA-binding domain"/>
    <property type="match status" value="1"/>
</dbReference>
<dbReference type="InterPro" id="IPR002481">
    <property type="entry name" value="FUR"/>
</dbReference>
<dbReference type="InterPro" id="IPR043135">
    <property type="entry name" value="Fur_C"/>
</dbReference>
<dbReference type="InterPro" id="IPR036388">
    <property type="entry name" value="WH-like_DNA-bd_sf"/>
</dbReference>
<dbReference type="InterPro" id="IPR036390">
    <property type="entry name" value="WH_DNA-bd_sf"/>
</dbReference>
<dbReference type="PANTHER" id="PTHR33202:SF1">
    <property type="entry name" value="FERRIC UPTAKE REGULATION PROTEIN"/>
    <property type="match status" value="1"/>
</dbReference>
<dbReference type="PANTHER" id="PTHR33202">
    <property type="entry name" value="ZINC UPTAKE REGULATION PROTEIN"/>
    <property type="match status" value="1"/>
</dbReference>
<dbReference type="Pfam" id="PF01475">
    <property type="entry name" value="FUR"/>
    <property type="match status" value="1"/>
</dbReference>
<dbReference type="SUPFAM" id="SSF46785">
    <property type="entry name" value="Winged helix' DNA-binding domain"/>
    <property type="match status" value="1"/>
</dbReference>
<comment type="function">
    <text evidence="1">Acts as a global negative controlling element, employing Fe(2+) as a cofactor to bind the operator of the repressed genes.</text>
</comment>
<comment type="subunit">
    <text evidence="1">Homodimer.</text>
</comment>
<comment type="subcellular location">
    <subcellularLocation>
        <location evidence="1">Cytoplasm</location>
    </subcellularLocation>
</comment>
<comment type="similarity">
    <text evidence="2">Belongs to the Fur family.</text>
</comment>
<organism>
    <name type="scientific">Staphylococcus epidermidis (strain ATCC 35984 / DSM 28319 / BCRC 17069 / CCUG 31568 / BM 3577 / RP62A)</name>
    <dbReference type="NCBI Taxonomy" id="176279"/>
    <lineage>
        <taxon>Bacteria</taxon>
        <taxon>Bacillati</taxon>
        <taxon>Bacillota</taxon>
        <taxon>Bacilli</taxon>
        <taxon>Bacillales</taxon>
        <taxon>Staphylococcaceae</taxon>
        <taxon>Staphylococcus</taxon>
    </lineage>
</organism>
<sequence>MNTNDAIKVLKENGLKYTDKRKDMLDIFVKEDKYLNAKHIQQQMDKDYPGISFDTVYRNLHLFKDLGIIESTELDGEMKFRIACTNHHHHHFICENCGETKVIDFCPIEKIKSQLPNVNIHTHKLEVYGICEECQRKAN</sequence>
<proteinExistence type="inferred from homology"/>
<accession>Q5HNZ4</accession>
<reference key="1">
    <citation type="journal article" date="2005" name="J. Bacteriol.">
        <title>Insights on evolution of virulence and resistance from the complete genome analysis of an early methicillin-resistant Staphylococcus aureus strain and a biofilm-producing methicillin-resistant Staphylococcus epidermidis strain.</title>
        <authorList>
            <person name="Gill S.R."/>
            <person name="Fouts D.E."/>
            <person name="Archer G.L."/>
            <person name="Mongodin E.F."/>
            <person name="DeBoy R.T."/>
            <person name="Ravel J."/>
            <person name="Paulsen I.T."/>
            <person name="Kolonay J.F."/>
            <person name="Brinkac L.M."/>
            <person name="Beanan M.J."/>
            <person name="Dodson R.J."/>
            <person name="Daugherty S.C."/>
            <person name="Madupu R."/>
            <person name="Angiuoli S.V."/>
            <person name="Durkin A.S."/>
            <person name="Haft D.H."/>
            <person name="Vamathevan J.J."/>
            <person name="Khouri H."/>
            <person name="Utterback T.R."/>
            <person name="Lee C."/>
            <person name="Dimitrov G."/>
            <person name="Jiang L."/>
            <person name="Qin H."/>
            <person name="Weidman J."/>
            <person name="Tran K."/>
            <person name="Kang K.H."/>
            <person name="Hance I.R."/>
            <person name="Nelson K.E."/>
            <person name="Fraser C.M."/>
        </authorList>
    </citation>
    <scope>NUCLEOTIDE SEQUENCE [LARGE SCALE GENOMIC DNA]</scope>
    <source>
        <strain>ATCC 35984 / DSM 28319 / BCRC 17069 / CCUG 31568 / BM 3577 / RP62A</strain>
    </source>
</reference>